<evidence type="ECO:0000255" key="1">
    <source>
        <dbReference type="HAMAP-Rule" id="MF_00727"/>
    </source>
</evidence>
<reference key="1">
    <citation type="journal article" date="2007" name="PLoS ONE">
        <title>Paradoxical DNA repair and peroxide resistance gene conservation in Bacillus pumilus SAFR-032.</title>
        <authorList>
            <person name="Gioia J."/>
            <person name="Yerrapragada S."/>
            <person name="Qin X."/>
            <person name="Jiang H."/>
            <person name="Igboeli O.C."/>
            <person name="Muzny D."/>
            <person name="Dugan-Rocha S."/>
            <person name="Ding Y."/>
            <person name="Hawes A."/>
            <person name="Liu W."/>
            <person name="Perez L."/>
            <person name="Kovar C."/>
            <person name="Dinh H."/>
            <person name="Lee S."/>
            <person name="Nazareth L."/>
            <person name="Blyth P."/>
            <person name="Holder M."/>
            <person name="Buhay C."/>
            <person name="Tirumalai M.R."/>
            <person name="Liu Y."/>
            <person name="Dasgupta I."/>
            <person name="Bokhetache L."/>
            <person name="Fujita M."/>
            <person name="Karouia F."/>
            <person name="Eswara Moorthy P."/>
            <person name="Siefert J."/>
            <person name="Uzman A."/>
            <person name="Buzumbo P."/>
            <person name="Verma A."/>
            <person name="Zwiya H."/>
            <person name="McWilliams B.D."/>
            <person name="Olowu A."/>
            <person name="Clinkenbeard K.D."/>
            <person name="Newcombe D."/>
            <person name="Golebiewski L."/>
            <person name="Petrosino J.F."/>
            <person name="Nicholson W.L."/>
            <person name="Fox G.E."/>
            <person name="Venkateswaran K."/>
            <person name="Highlander S.K."/>
            <person name="Weinstock G.M."/>
        </authorList>
    </citation>
    <scope>NUCLEOTIDE SEQUENCE [LARGE SCALE GENOMIC DNA]</scope>
    <source>
        <strain>SAFR-032</strain>
    </source>
</reference>
<comment type="function">
    <text evidence="1">Probably plays a role in the assembly of the spore coat proteins by catalyzing epsilon-(gamma-glutamyl)lysine cross-links.</text>
</comment>
<comment type="catalytic activity">
    <reaction evidence="1">
        <text>L-glutaminyl-[protein] + L-lysyl-[protein] = [protein]-L-lysyl-N(6)-5-L-glutamyl-[protein] + NH4(+)</text>
        <dbReference type="Rhea" id="RHEA:54816"/>
        <dbReference type="Rhea" id="RHEA-COMP:9752"/>
        <dbReference type="Rhea" id="RHEA-COMP:10207"/>
        <dbReference type="Rhea" id="RHEA-COMP:14005"/>
        <dbReference type="ChEBI" id="CHEBI:28938"/>
        <dbReference type="ChEBI" id="CHEBI:29969"/>
        <dbReference type="ChEBI" id="CHEBI:30011"/>
        <dbReference type="ChEBI" id="CHEBI:138370"/>
        <dbReference type="EC" id="2.3.2.13"/>
    </reaction>
</comment>
<comment type="similarity">
    <text evidence="1">Belongs to the bacillus TGase family.</text>
</comment>
<protein>
    <recommendedName>
        <fullName evidence="1">Protein-glutamine gamma-glutamyltransferase</fullName>
        <ecNumber evidence="1">2.3.2.13</ecNumber>
    </recommendedName>
    <alternativeName>
        <fullName evidence="1">Transglutaminase</fullName>
        <shortName evidence="1">TGase</shortName>
    </alternativeName>
</protein>
<keyword id="KW-0012">Acyltransferase</keyword>
<keyword id="KW-0749">Sporulation</keyword>
<keyword id="KW-0808">Transferase</keyword>
<dbReference type="EC" id="2.3.2.13" evidence="1"/>
<dbReference type="EMBL" id="CP000813">
    <property type="protein sequence ID" value="ABV63447.1"/>
    <property type="molecule type" value="Genomic_DNA"/>
</dbReference>
<dbReference type="RefSeq" id="WP_012011070.1">
    <property type="nucleotide sequence ID" value="NZ_VEIS01000026.1"/>
</dbReference>
<dbReference type="SMR" id="A8FGT0"/>
<dbReference type="STRING" id="315750.BPUM_2792"/>
<dbReference type="GeneID" id="5622080"/>
<dbReference type="KEGG" id="bpu:BPUM_2792"/>
<dbReference type="eggNOG" id="ENOG502Z8C5">
    <property type="taxonomic scope" value="Bacteria"/>
</dbReference>
<dbReference type="HOGENOM" id="CLU_088922_0_0_9"/>
<dbReference type="OrthoDB" id="1845399at2"/>
<dbReference type="Proteomes" id="UP000001355">
    <property type="component" value="Chromosome"/>
</dbReference>
<dbReference type="GO" id="GO:0003810">
    <property type="term" value="F:protein-glutamine gamma-glutamyltransferase activity"/>
    <property type="evidence" value="ECO:0007669"/>
    <property type="project" value="UniProtKB-UniRule"/>
</dbReference>
<dbReference type="GO" id="GO:0030435">
    <property type="term" value="P:sporulation resulting in formation of a cellular spore"/>
    <property type="evidence" value="ECO:0007669"/>
    <property type="project" value="UniProtKB-UniRule"/>
</dbReference>
<dbReference type="HAMAP" id="MF_00727">
    <property type="entry name" value="Tgl"/>
    <property type="match status" value="1"/>
</dbReference>
<dbReference type="InterPro" id="IPR020916">
    <property type="entry name" value="Gln_gamma-glutamylTfrase_bac"/>
</dbReference>
<dbReference type="NCBIfam" id="NF002869">
    <property type="entry name" value="PRK03187.1"/>
    <property type="match status" value="1"/>
</dbReference>
<dbReference type="Pfam" id="PF20085">
    <property type="entry name" value="TGL"/>
    <property type="match status" value="1"/>
</dbReference>
<accession>A8FGT0</accession>
<sequence length="246" mass="28411">MIILSGQPVTNEQLASFQLEGQKRIILMQLQASNDTFRYRQASDLLFEVTLRSNIMNAARDLNKSGASFAIFQRSRANDAFWRVSEAGALELRYQVEPSRGIKDIFENGSQYAFECATAIVIVFYMGVLQTVGDEKFNRRLRSLTLYDWHYDTLSIYTERGNDFIYGDCLYFENPEFSYQQSQWRGENVIYLGEDQYYGHGLGILTAAEIIDKLNKRRRPGAVQSAYLLPQTTRMDVIYLRQMFGS</sequence>
<organism>
    <name type="scientific">Bacillus pumilus (strain SAFR-032)</name>
    <dbReference type="NCBI Taxonomy" id="315750"/>
    <lineage>
        <taxon>Bacteria</taxon>
        <taxon>Bacillati</taxon>
        <taxon>Bacillota</taxon>
        <taxon>Bacilli</taxon>
        <taxon>Bacillales</taxon>
        <taxon>Bacillaceae</taxon>
        <taxon>Bacillus</taxon>
    </lineage>
</organism>
<gene>
    <name evidence="1" type="primary">tgl</name>
    <name type="ordered locus">BPUM_2792</name>
</gene>
<name>TGL_BACP2</name>
<proteinExistence type="inferred from homology"/>
<feature type="chain" id="PRO_1000197970" description="Protein-glutamine gamma-glutamyltransferase">
    <location>
        <begin position="1"/>
        <end position="246"/>
    </location>
</feature>